<sequence length="133" mass="15164">MAKEFGRPQRVAQEMQKEIAIILQREIKDPRLGMMTTVSGVEMSRDLAYAKVFVTFLNDQDEAAVKNGIKALQEASGFIRSLLGKAMRLRIVPELTFFYDNSLVEGMRMSNLVTNVVKHDEERRVNPDDSKED</sequence>
<reference key="1">
    <citation type="journal article" date="2011" name="J. Bacteriol.">
        <title>Comparative genomics of 28 Salmonella enterica isolates: evidence for CRISPR-mediated adaptive sublineage evolution.</title>
        <authorList>
            <person name="Fricke W.F."/>
            <person name="Mammel M.K."/>
            <person name="McDermott P.F."/>
            <person name="Tartera C."/>
            <person name="White D.G."/>
            <person name="Leclerc J.E."/>
            <person name="Ravel J."/>
            <person name="Cebula T.A."/>
        </authorList>
    </citation>
    <scope>NUCLEOTIDE SEQUENCE [LARGE SCALE GENOMIC DNA]</scope>
    <source>
        <strain>SL254</strain>
    </source>
</reference>
<protein>
    <recommendedName>
        <fullName evidence="1">Ribosome-binding factor A</fullName>
    </recommendedName>
</protein>
<feature type="chain" id="PRO_1000088928" description="Ribosome-binding factor A">
    <location>
        <begin position="1"/>
        <end position="133"/>
    </location>
</feature>
<keyword id="KW-0963">Cytoplasm</keyword>
<keyword id="KW-0690">Ribosome biogenesis</keyword>
<dbReference type="EMBL" id="CP001113">
    <property type="protein sequence ID" value="ACF65060.1"/>
    <property type="molecule type" value="Genomic_DNA"/>
</dbReference>
<dbReference type="RefSeq" id="WP_001040200.1">
    <property type="nucleotide sequence ID" value="NZ_CCMR01000001.1"/>
</dbReference>
<dbReference type="SMR" id="B4T6Z7"/>
<dbReference type="KEGG" id="see:SNSL254_A3543"/>
<dbReference type="HOGENOM" id="CLU_089475_5_0_6"/>
<dbReference type="Proteomes" id="UP000008824">
    <property type="component" value="Chromosome"/>
</dbReference>
<dbReference type="GO" id="GO:0005829">
    <property type="term" value="C:cytosol"/>
    <property type="evidence" value="ECO:0007669"/>
    <property type="project" value="TreeGrafter"/>
</dbReference>
<dbReference type="GO" id="GO:0043024">
    <property type="term" value="F:ribosomal small subunit binding"/>
    <property type="evidence" value="ECO:0007669"/>
    <property type="project" value="TreeGrafter"/>
</dbReference>
<dbReference type="GO" id="GO:0030490">
    <property type="term" value="P:maturation of SSU-rRNA"/>
    <property type="evidence" value="ECO:0007669"/>
    <property type="project" value="UniProtKB-UniRule"/>
</dbReference>
<dbReference type="FunFam" id="3.30.300.20:FF:000007">
    <property type="entry name" value="Ribosome-binding factor A"/>
    <property type="match status" value="1"/>
</dbReference>
<dbReference type="Gene3D" id="3.30.300.20">
    <property type="match status" value="1"/>
</dbReference>
<dbReference type="HAMAP" id="MF_00003">
    <property type="entry name" value="RbfA"/>
    <property type="match status" value="1"/>
</dbReference>
<dbReference type="InterPro" id="IPR015946">
    <property type="entry name" value="KH_dom-like_a/b"/>
</dbReference>
<dbReference type="InterPro" id="IPR000238">
    <property type="entry name" value="RbfA"/>
</dbReference>
<dbReference type="InterPro" id="IPR023799">
    <property type="entry name" value="RbfA_dom_sf"/>
</dbReference>
<dbReference type="InterPro" id="IPR020053">
    <property type="entry name" value="Ribosome-bd_factorA_CS"/>
</dbReference>
<dbReference type="NCBIfam" id="TIGR00082">
    <property type="entry name" value="rbfA"/>
    <property type="match status" value="1"/>
</dbReference>
<dbReference type="PANTHER" id="PTHR33515">
    <property type="entry name" value="RIBOSOME-BINDING FACTOR A, CHLOROPLASTIC-RELATED"/>
    <property type="match status" value="1"/>
</dbReference>
<dbReference type="PANTHER" id="PTHR33515:SF1">
    <property type="entry name" value="RIBOSOME-BINDING FACTOR A, CHLOROPLASTIC-RELATED"/>
    <property type="match status" value="1"/>
</dbReference>
<dbReference type="Pfam" id="PF02033">
    <property type="entry name" value="RBFA"/>
    <property type="match status" value="1"/>
</dbReference>
<dbReference type="SUPFAM" id="SSF89919">
    <property type="entry name" value="Ribosome-binding factor A, RbfA"/>
    <property type="match status" value="1"/>
</dbReference>
<dbReference type="PROSITE" id="PS01319">
    <property type="entry name" value="RBFA"/>
    <property type="match status" value="1"/>
</dbReference>
<accession>B4T6Z7</accession>
<proteinExistence type="inferred from homology"/>
<evidence type="ECO:0000255" key="1">
    <source>
        <dbReference type="HAMAP-Rule" id="MF_00003"/>
    </source>
</evidence>
<organism>
    <name type="scientific">Salmonella newport (strain SL254)</name>
    <dbReference type="NCBI Taxonomy" id="423368"/>
    <lineage>
        <taxon>Bacteria</taxon>
        <taxon>Pseudomonadati</taxon>
        <taxon>Pseudomonadota</taxon>
        <taxon>Gammaproteobacteria</taxon>
        <taxon>Enterobacterales</taxon>
        <taxon>Enterobacteriaceae</taxon>
        <taxon>Salmonella</taxon>
    </lineage>
</organism>
<comment type="function">
    <text evidence="1">One of several proteins that assist in the late maturation steps of the functional core of the 30S ribosomal subunit. Associates with free 30S ribosomal subunits (but not with 30S subunits that are part of 70S ribosomes or polysomes). Required for efficient processing of 16S rRNA. May interact with the 5'-terminal helix region of 16S rRNA.</text>
</comment>
<comment type="subunit">
    <text evidence="1">Monomer. Binds 30S ribosomal subunits, but not 50S ribosomal subunits or 70S ribosomes.</text>
</comment>
<comment type="subcellular location">
    <subcellularLocation>
        <location evidence="1">Cytoplasm</location>
    </subcellularLocation>
</comment>
<comment type="similarity">
    <text evidence="1">Belongs to the RbfA family.</text>
</comment>
<name>RBFA_SALNS</name>
<gene>
    <name evidence="1" type="primary">rbfA</name>
    <name type="ordered locus">SNSL254_A3543</name>
</gene>